<gene>
    <name type="primary">NTMT1</name>
    <name type="synonym">METTL11A</name>
    <name type="ORF">PANDA_003235</name>
</gene>
<organism>
    <name type="scientific">Ailuropoda melanoleuca</name>
    <name type="common">Giant panda</name>
    <dbReference type="NCBI Taxonomy" id="9646"/>
    <lineage>
        <taxon>Eukaryota</taxon>
        <taxon>Metazoa</taxon>
        <taxon>Chordata</taxon>
        <taxon>Craniata</taxon>
        <taxon>Vertebrata</taxon>
        <taxon>Euteleostomi</taxon>
        <taxon>Mammalia</taxon>
        <taxon>Eutheria</taxon>
        <taxon>Laurasiatheria</taxon>
        <taxon>Carnivora</taxon>
        <taxon>Caniformia</taxon>
        <taxon>Ursidae</taxon>
        <taxon>Ailuropoda</taxon>
    </lineage>
</organism>
<protein>
    <recommendedName>
        <fullName>N-terminal Xaa-Pro-Lys N-methyltransferase 1</fullName>
        <ecNumber evidence="1">2.1.1.244</ecNumber>
    </recommendedName>
    <alternativeName>
        <fullName>Alpha N-terminal protein methyltransferase 1A</fullName>
    </alternativeName>
    <alternativeName>
        <fullName>Methyltransferase-like protein 11A</fullName>
    </alternativeName>
    <alternativeName>
        <fullName>X-Pro-Lys N-terminal protein methyltransferase 1A</fullName>
        <shortName>NTM1A</shortName>
    </alternativeName>
    <component>
        <recommendedName>
            <fullName>N-terminal Xaa-Pro-Lys N-methyltransferase 1, N-terminally processed</fullName>
        </recommendedName>
    </component>
</protein>
<dbReference type="EC" id="2.1.1.244" evidence="1"/>
<dbReference type="EMBL" id="GL192421">
    <property type="protein sequence ID" value="EFB25068.1"/>
    <property type="molecule type" value="Genomic_DNA"/>
</dbReference>
<dbReference type="RefSeq" id="XP_002915248.1">
    <property type="nucleotide sequence ID" value="XM_002915202.4"/>
</dbReference>
<dbReference type="RefSeq" id="XP_019650819.1">
    <property type="nucleotide sequence ID" value="XM_019795260.2"/>
</dbReference>
<dbReference type="RefSeq" id="XP_019650820.1">
    <property type="nucleotide sequence ID" value="XM_019795261.1"/>
</dbReference>
<dbReference type="RefSeq" id="XP_019650821.1">
    <property type="nucleotide sequence ID" value="XM_019795262.1"/>
</dbReference>
<dbReference type="RefSeq" id="XP_019650822.1">
    <property type="nucleotide sequence ID" value="XM_019795263.1"/>
</dbReference>
<dbReference type="SMR" id="D2H163"/>
<dbReference type="STRING" id="9646.ENSAMEP00000016883"/>
<dbReference type="Ensembl" id="ENSAMET00000031878.1">
    <property type="protein sequence ID" value="ENSAMEP00000022635.1"/>
    <property type="gene ID" value="ENSAMEG00000026209.1"/>
</dbReference>
<dbReference type="GeneID" id="100464977"/>
<dbReference type="KEGG" id="aml:100464977"/>
<dbReference type="CTD" id="28989"/>
<dbReference type="eggNOG" id="KOG3178">
    <property type="taxonomic scope" value="Eukaryota"/>
</dbReference>
<dbReference type="GeneTree" id="ENSGT00390000008371"/>
<dbReference type="InParanoid" id="D2H163"/>
<dbReference type="OrthoDB" id="1298661at2759"/>
<dbReference type="Proteomes" id="UP000008912">
    <property type="component" value="Unassembled WGS sequence"/>
</dbReference>
<dbReference type="GO" id="GO:0005829">
    <property type="term" value="C:cytosol"/>
    <property type="evidence" value="ECO:0007669"/>
    <property type="project" value="Ensembl"/>
</dbReference>
<dbReference type="GO" id="GO:0005654">
    <property type="term" value="C:nucleoplasm"/>
    <property type="evidence" value="ECO:0007669"/>
    <property type="project" value="Ensembl"/>
</dbReference>
<dbReference type="GO" id="GO:0005634">
    <property type="term" value="C:nucleus"/>
    <property type="evidence" value="ECO:0000250"/>
    <property type="project" value="UniProtKB"/>
</dbReference>
<dbReference type="GO" id="GO:0042054">
    <property type="term" value="F:histone methyltransferase activity"/>
    <property type="evidence" value="ECO:0000250"/>
    <property type="project" value="UniProtKB"/>
</dbReference>
<dbReference type="GO" id="GO:0071885">
    <property type="term" value="F:N-terminal protein N-methyltransferase activity"/>
    <property type="evidence" value="ECO:0000250"/>
    <property type="project" value="UniProtKB"/>
</dbReference>
<dbReference type="GO" id="GO:0008276">
    <property type="term" value="F:protein methyltransferase activity"/>
    <property type="evidence" value="ECO:0000250"/>
    <property type="project" value="UniProtKB"/>
</dbReference>
<dbReference type="GO" id="GO:0007059">
    <property type="term" value="P:chromosome segregation"/>
    <property type="evidence" value="ECO:0000250"/>
    <property type="project" value="UniProtKB"/>
</dbReference>
<dbReference type="GO" id="GO:0018013">
    <property type="term" value="P:N-terminal peptidyl-glycine methylation"/>
    <property type="evidence" value="ECO:0000250"/>
    <property type="project" value="UniProtKB"/>
</dbReference>
<dbReference type="GO" id="GO:0018016">
    <property type="term" value="P:N-terminal peptidyl-proline dimethylation"/>
    <property type="evidence" value="ECO:0000250"/>
    <property type="project" value="UniProtKB"/>
</dbReference>
<dbReference type="GO" id="GO:0035572">
    <property type="term" value="P:N-terminal peptidyl-serine dimethylation"/>
    <property type="evidence" value="ECO:0000250"/>
    <property type="project" value="UniProtKB"/>
</dbReference>
<dbReference type="GO" id="GO:0035573">
    <property type="term" value="P:N-terminal peptidyl-serine trimethylation"/>
    <property type="evidence" value="ECO:0000250"/>
    <property type="project" value="UniProtKB"/>
</dbReference>
<dbReference type="GO" id="GO:0007051">
    <property type="term" value="P:spindle organization"/>
    <property type="evidence" value="ECO:0000250"/>
    <property type="project" value="UniProtKB"/>
</dbReference>
<dbReference type="CDD" id="cd02440">
    <property type="entry name" value="AdoMet_MTases"/>
    <property type="match status" value="1"/>
</dbReference>
<dbReference type="FunFam" id="3.40.50.150:FF:000025">
    <property type="entry name" value="N-terminal Xaa-Pro-Lys N-methyltransferase 1"/>
    <property type="match status" value="1"/>
</dbReference>
<dbReference type="Gene3D" id="3.40.50.150">
    <property type="entry name" value="Vaccinia Virus protein VP39"/>
    <property type="match status" value="1"/>
</dbReference>
<dbReference type="InterPro" id="IPR008576">
    <property type="entry name" value="MeTrfase_NTM1"/>
</dbReference>
<dbReference type="InterPro" id="IPR029063">
    <property type="entry name" value="SAM-dependent_MTases_sf"/>
</dbReference>
<dbReference type="PANTHER" id="PTHR12753">
    <property type="entry name" value="AD-003 - RELATED"/>
    <property type="match status" value="1"/>
</dbReference>
<dbReference type="PANTHER" id="PTHR12753:SF1">
    <property type="entry name" value="N-TERMINAL XAA-PRO-LYS N-METHYLTRANSFERASE 1"/>
    <property type="match status" value="1"/>
</dbReference>
<dbReference type="Pfam" id="PF05891">
    <property type="entry name" value="Methyltransf_PK"/>
    <property type="match status" value="1"/>
</dbReference>
<dbReference type="PIRSF" id="PIRSF016958">
    <property type="entry name" value="DUF858_MeTrfase_lik"/>
    <property type="match status" value="1"/>
</dbReference>
<dbReference type="SUPFAM" id="SSF53335">
    <property type="entry name" value="S-adenosyl-L-methionine-dependent methyltransferases"/>
    <property type="match status" value="1"/>
</dbReference>
<evidence type="ECO:0000250" key="1">
    <source>
        <dbReference type="UniProtKB" id="Q9BV86"/>
    </source>
</evidence>
<evidence type="ECO:0000305" key="2"/>
<keyword id="KW-0007">Acetylation</keyword>
<keyword id="KW-0489">Methyltransferase</keyword>
<keyword id="KW-0539">Nucleus</keyword>
<keyword id="KW-1185">Reference proteome</keyword>
<keyword id="KW-0949">S-adenosyl-L-methionine</keyword>
<keyword id="KW-0808">Transferase</keyword>
<sequence>MTSEVIEDEKQFYLKAKTYWKEVPPTVDGMLGGYGHISSIDISSSRKFLQRFLREGPNKTGTSCALDCGAGIGRITKRLLLPLFGVVDMVDVTEDFLIKARTYLGEEGKRVRNYFCCGLQDFSPEPNSYDVIWIQWVIGHLTDQHLAEFLRRCKQGLRPNGIIVIKDNMAQEGVILDDVDSSVCRDLDVVHRIVRSAGLSLLAEERQENLPDEIYHVYSLALR</sequence>
<reference key="1">
    <citation type="journal article" date="2010" name="Nature">
        <title>The sequence and de novo assembly of the giant panda genome.</title>
        <authorList>
            <person name="Li R."/>
            <person name="Fan W."/>
            <person name="Tian G."/>
            <person name="Zhu H."/>
            <person name="He L."/>
            <person name="Cai J."/>
            <person name="Huang Q."/>
            <person name="Cai Q."/>
            <person name="Li B."/>
            <person name="Bai Y."/>
            <person name="Zhang Z."/>
            <person name="Zhang Y."/>
            <person name="Wang W."/>
            <person name="Li J."/>
            <person name="Wei F."/>
            <person name="Li H."/>
            <person name="Jian M."/>
            <person name="Li J."/>
            <person name="Zhang Z."/>
            <person name="Nielsen R."/>
            <person name="Li D."/>
            <person name="Gu W."/>
            <person name="Yang Z."/>
            <person name="Xuan Z."/>
            <person name="Ryder O.A."/>
            <person name="Leung F.C."/>
            <person name="Zhou Y."/>
            <person name="Cao J."/>
            <person name="Sun X."/>
            <person name="Fu Y."/>
            <person name="Fang X."/>
            <person name="Guo X."/>
            <person name="Wang B."/>
            <person name="Hou R."/>
            <person name="Shen F."/>
            <person name="Mu B."/>
            <person name="Ni P."/>
            <person name="Lin R."/>
            <person name="Qian W."/>
            <person name="Wang G."/>
            <person name="Yu C."/>
            <person name="Nie W."/>
            <person name="Wang J."/>
            <person name="Wu Z."/>
            <person name="Liang H."/>
            <person name="Min J."/>
            <person name="Wu Q."/>
            <person name="Cheng S."/>
            <person name="Ruan J."/>
            <person name="Wang M."/>
            <person name="Shi Z."/>
            <person name="Wen M."/>
            <person name="Liu B."/>
            <person name="Ren X."/>
            <person name="Zheng H."/>
            <person name="Dong D."/>
            <person name="Cook K."/>
            <person name="Shan G."/>
            <person name="Zhang H."/>
            <person name="Kosiol C."/>
            <person name="Xie X."/>
            <person name="Lu Z."/>
            <person name="Zheng H."/>
            <person name="Li Y."/>
            <person name="Steiner C.C."/>
            <person name="Lam T.T."/>
            <person name="Lin S."/>
            <person name="Zhang Q."/>
            <person name="Li G."/>
            <person name="Tian J."/>
            <person name="Gong T."/>
            <person name="Liu H."/>
            <person name="Zhang D."/>
            <person name="Fang L."/>
            <person name="Ye C."/>
            <person name="Zhang J."/>
            <person name="Hu W."/>
            <person name="Xu A."/>
            <person name="Ren Y."/>
            <person name="Zhang G."/>
            <person name="Bruford M.W."/>
            <person name="Li Q."/>
            <person name="Ma L."/>
            <person name="Guo Y."/>
            <person name="An N."/>
            <person name="Hu Y."/>
            <person name="Zheng Y."/>
            <person name="Shi Y."/>
            <person name="Li Z."/>
            <person name="Liu Q."/>
            <person name="Chen Y."/>
            <person name="Zhao J."/>
            <person name="Qu N."/>
            <person name="Zhao S."/>
            <person name="Tian F."/>
            <person name="Wang X."/>
            <person name="Wang H."/>
            <person name="Xu L."/>
            <person name="Liu X."/>
            <person name="Vinar T."/>
            <person name="Wang Y."/>
            <person name="Lam T.W."/>
            <person name="Yiu S.M."/>
            <person name="Liu S."/>
            <person name="Zhang H."/>
            <person name="Li D."/>
            <person name="Huang Y."/>
            <person name="Wang X."/>
            <person name="Yang G."/>
            <person name="Jiang Z."/>
            <person name="Wang J."/>
            <person name="Qin N."/>
            <person name="Li L."/>
            <person name="Li J."/>
            <person name="Bolund L."/>
            <person name="Kristiansen K."/>
            <person name="Wong G.K."/>
            <person name="Olson M."/>
            <person name="Zhang X."/>
            <person name="Li S."/>
            <person name="Yang H."/>
            <person name="Wang J."/>
            <person name="Wang J."/>
        </authorList>
    </citation>
    <scope>NUCLEOTIDE SEQUENCE [LARGE SCALE GENOMIC DNA]</scope>
</reference>
<accession>D2H163</accession>
<feature type="chain" id="PRO_0000423226" description="N-terminal Xaa-Pro-Lys N-methyltransferase 1">
    <location>
        <begin position="1"/>
        <end position="223"/>
    </location>
</feature>
<feature type="initiator methionine" description="Removed; alternate" evidence="1">
    <location>
        <position position="1"/>
    </location>
</feature>
<feature type="chain" id="PRO_0000399774" description="N-terminal Xaa-Pro-Lys N-methyltransferase 1, N-terminally processed">
    <location>
        <begin position="2"/>
        <end position="223"/>
    </location>
</feature>
<feature type="binding site" evidence="1">
    <location>
        <position position="69"/>
    </location>
    <ligand>
        <name>S-adenosyl-L-methionine</name>
        <dbReference type="ChEBI" id="CHEBI:59789"/>
    </ligand>
</feature>
<feature type="binding site" evidence="1">
    <location>
        <position position="74"/>
    </location>
    <ligand>
        <name>S-adenosyl-L-methionine</name>
        <dbReference type="ChEBI" id="CHEBI:59789"/>
    </ligand>
</feature>
<feature type="binding site" evidence="1">
    <location>
        <begin position="91"/>
        <end position="93"/>
    </location>
    <ligand>
        <name>S-adenosyl-L-methionine</name>
        <dbReference type="ChEBI" id="CHEBI:59789"/>
    </ligand>
</feature>
<feature type="binding site" evidence="1">
    <location>
        <begin position="119"/>
        <end position="120"/>
    </location>
    <ligand>
        <name>S-adenosyl-L-methionine</name>
        <dbReference type="ChEBI" id="CHEBI:59789"/>
    </ligand>
</feature>
<feature type="binding site" evidence="1">
    <location>
        <position position="135"/>
    </location>
    <ligand>
        <name>S-adenosyl-L-methionine</name>
        <dbReference type="ChEBI" id="CHEBI:59789"/>
    </ligand>
</feature>
<feature type="modified residue" description="N-acetylmethionine" evidence="1">
    <location>
        <position position="1"/>
    </location>
</feature>
<feature type="modified residue" description="N-acetylthreonine; in N-terminal Xaa-Pro-Lys N-methyltransferase 1, N-terminally processed" evidence="1">
    <location>
        <position position="2"/>
    </location>
</feature>
<proteinExistence type="inferred from homology"/>
<comment type="function">
    <text evidence="1">Distributive alpha-N-methyltransferase that methylates the N-terminus of target proteins containing the N-terminal motif [Ala/Gly/Pro/Ser]-Pro-Lys when the initiator Met is cleaved. Specifically catalyzes mono-, di- or tri-methylation of the exposed alpha-amino group of the Ala, Gly or Ser residue in the [Ala/Gly/Ser]-Pro-Lys motif and mono- or di-methylation of Pro in the Pro-Pro-Lys motif. Some of the substrates may be primed by NTMT2-mediated monomethylation. Catalyzes the trimethylation of the N-terminal Gly in CENPA (after removal of Met-1). Responsible for the N-terminal methylation of KLHL31, MYL2, MYL3, RB1, RCC1, RPL23A and SET. Required during mitosis for normal bipolar spindle formation and chromosome segregation via its action on RCC1.</text>
</comment>
<comment type="catalytic activity">
    <reaction evidence="1">
        <text>N-terminal L-alanyl-L-prolyl-L-lysyl-[protein] + 3 S-adenosyl-L-methionine = N-terminal N,N,N-trimethyl-L-alanyl-L-prolyl-L-lysyl-[protein] + 3 S-adenosyl-L-homocysteine + 3 H(+)</text>
        <dbReference type="Rhea" id="RHEA:54712"/>
        <dbReference type="Rhea" id="RHEA-COMP:13785"/>
        <dbReference type="Rhea" id="RHEA-COMP:13971"/>
        <dbReference type="ChEBI" id="CHEBI:15378"/>
        <dbReference type="ChEBI" id="CHEBI:57856"/>
        <dbReference type="ChEBI" id="CHEBI:59789"/>
        <dbReference type="ChEBI" id="CHEBI:138057"/>
        <dbReference type="ChEBI" id="CHEBI:138315"/>
        <dbReference type="EC" id="2.1.1.244"/>
    </reaction>
</comment>
<comment type="catalytic activity">
    <reaction evidence="1">
        <text>N-terminal L-seryl-L-prolyl-L-lysyl-[protein] + 3 S-adenosyl-L-methionine = N-terminal N,N,N-trimethyl-L-seryl-L-prolyl-L-lysyl-[protein] + 3 S-adenosyl-L-homocysteine + 3 H(+)</text>
        <dbReference type="Rhea" id="RHEA:54724"/>
        <dbReference type="Rhea" id="RHEA-COMP:13789"/>
        <dbReference type="Rhea" id="RHEA-COMP:13973"/>
        <dbReference type="ChEBI" id="CHEBI:15378"/>
        <dbReference type="ChEBI" id="CHEBI:57856"/>
        <dbReference type="ChEBI" id="CHEBI:59789"/>
        <dbReference type="ChEBI" id="CHEBI:138061"/>
        <dbReference type="ChEBI" id="CHEBI:138317"/>
        <dbReference type="EC" id="2.1.1.244"/>
    </reaction>
</comment>
<comment type="catalytic activity">
    <reaction evidence="1">
        <text>N-terminal L-prolyl-L-prolyl-L-lysyl-[protein] + 2 S-adenosyl-L-methionine = N-terminal N,N-dimethyl-L-prolyl-L-prolyl-L-lysyl-[protein] + 2 S-adenosyl-L-homocysteine + 2 H(+)</text>
        <dbReference type="Rhea" id="RHEA:54736"/>
        <dbReference type="Rhea" id="RHEA-COMP:13787"/>
        <dbReference type="Rhea" id="RHEA-COMP:13974"/>
        <dbReference type="ChEBI" id="CHEBI:15378"/>
        <dbReference type="ChEBI" id="CHEBI:57856"/>
        <dbReference type="ChEBI" id="CHEBI:59789"/>
        <dbReference type="ChEBI" id="CHEBI:138059"/>
        <dbReference type="ChEBI" id="CHEBI:138318"/>
        <dbReference type="EC" id="2.1.1.244"/>
    </reaction>
</comment>
<comment type="subcellular location">
    <subcellularLocation>
        <location evidence="1">Nucleus</location>
    </subcellularLocation>
    <text evidence="1">Predominantly nuclear.</text>
</comment>
<comment type="similarity">
    <text evidence="2">Belongs to the methyltransferase superfamily. NTM1 family.</text>
</comment>
<name>NTM1A_AILME</name>